<gene>
    <name evidence="5" type="primary">FENS</name>
</gene>
<name>FENS_LAVPL</name>
<proteinExistence type="evidence at protein level"/>
<sequence>MSSLVMHVGIVNKPAITYLPTLSRSASNLHNVSSTRLQTSCSLQLDYKPVDETRRSGNYQPSAWDFEYIQSLKNKYKEEKYLTRHTKLTVQVKMLLDEDMEAVQQLDFIEDLNNLGISYLFKDKITQILNHIYNEHRCFHNNEAEESDLYFTALGFRLLRQHGFKVSQEVFDCFKNEKYTNFKASLAGDTKGLLQLYEASFLLREGEDTLELARKFSTKLLQQKIDEGEPDNNLLSCIRHSLELPLHWRLQRLEARWFLDAYATRHDMNPIIFELAKLEFNITQATQQEELKDLSRWWNSTGLAEKLPFARDRIVESYFWAMGTFEPHQYGYQRELVSKIIALTTVVDDIYDVYGTLEELELFTDVIRRWETESIDELPYYIQLCYLAVNKFVFDLAHDVLKDKGFNSLPYLKRSWKDLIERYLIEAKWYHNRYTPSLEEYLNNARVTITCPTILSQIYFALASPIEKPVIEVMYKYHDILYLSGMLLRLPDDLGTAPFELKRGDVPKAVQCYMKERNVPEKEAREHVRFLIREASKQMNTAMAIDCPFTEDFAVAAANLGRVANLAYVEGDGFGVQHSNIYEHIGSLMFKPYA</sequence>
<dbReference type="EC" id="4.2.3.10" evidence="4"/>
<dbReference type="EC" id="4.2.3.-" evidence="4"/>
<dbReference type="EMBL" id="JX501511">
    <property type="protein sequence ID" value="AGN72798.1"/>
    <property type="molecule type" value="mRNA"/>
</dbReference>
<dbReference type="SMR" id="T1RRR9"/>
<dbReference type="BRENDA" id="4.2.3.10">
    <property type="organism ID" value="13954"/>
</dbReference>
<dbReference type="UniPathway" id="UPA00213"/>
<dbReference type="GO" id="GO:0009507">
    <property type="term" value="C:chloroplast"/>
    <property type="evidence" value="ECO:0007669"/>
    <property type="project" value="UniProtKB-SubCell"/>
</dbReference>
<dbReference type="GO" id="GO:0050437">
    <property type="term" value="F:(-)-endo-fenchol synthase activity"/>
    <property type="evidence" value="ECO:0000314"/>
    <property type="project" value="UniProtKB"/>
</dbReference>
<dbReference type="GO" id="GO:0016829">
    <property type="term" value="F:lyase activity"/>
    <property type="evidence" value="ECO:0000314"/>
    <property type="project" value="UniProtKB"/>
</dbReference>
<dbReference type="GO" id="GO:0000287">
    <property type="term" value="F:magnesium ion binding"/>
    <property type="evidence" value="ECO:0007669"/>
    <property type="project" value="InterPro"/>
</dbReference>
<dbReference type="GO" id="GO:0050550">
    <property type="term" value="F:pinene synthase activity"/>
    <property type="evidence" value="ECO:0000314"/>
    <property type="project" value="UniProtKB"/>
</dbReference>
<dbReference type="GO" id="GO:0010333">
    <property type="term" value="F:terpene synthase activity"/>
    <property type="evidence" value="ECO:0000314"/>
    <property type="project" value="UniProtKB"/>
</dbReference>
<dbReference type="GO" id="GO:0046248">
    <property type="term" value="P:alpha-pinene biosynthetic process"/>
    <property type="evidence" value="ECO:0000314"/>
    <property type="project" value="UniProtKB"/>
</dbReference>
<dbReference type="GO" id="GO:0016102">
    <property type="term" value="P:diterpenoid biosynthetic process"/>
    <property type="evidence" value="ECO:0007669"/>
    <property type="project" value="InterPro"/>
</dbReference>
<dbReference type="GO" id="GO:0010597">
    <property type="term" value="P:green leaf volatile biosynthetic process"/>
    <property type="evidence" value="ECO:0000314"/>
    <property type="project" value="UniProtKB"/>
</dbReference>
<dbReference type="GO" id="GO:0046250">
    <property type="term" value="P:limonene biosynthetic process"/>
    <property type="evidence" value="ECO:0000314"/>
    <property type="project" value="UniProtKB"/>
</dbReference>
<dbReference type="GO" id="GO:0016099">
    <property type="term" value="P:monoterpenoid biosynthetic process"/>
    <property type="evidence" value="ECO:0000314"/>
    <property type="project" value="UniProtKB"/>
</dbReference>
<dbReference type="CDD" id="cd00684">
    <property type="entry name" value="Terpene_cyclase_plant_C1"/>
    <property type="match status" value="1"/>
</dbReference>
<dbReference type="FunFam" id="1.10.600.10:FF:000007">
    <property type="entry name" value="Isoprene synthase, chloroplastic"/>
    <property type="match status" value="1"/>
</dbReference>
<dbReference type="FunFam" id="1.50.10.130:FF:000001">
    <property type="entry name" value="Isoprene synthase, chloroplastic"/>
    <property type="match status" value="1"/>
</dbReference>
<dbReference type="Gene3D" id="1.10.600.10">
    <property type="entry name" value="Farnesyl Diphosphate Synthase"/>
    <property type="match status" value="1"/>
</dbReference>
<dbReference type="Gene3D" id="1.50.10.130">
    <property type="entry name" value="Terpene synthase, N-terminal domain"/>
    <property type="match status" value="1"/>
</dbReference>
<dbReference type="InterPro" id="IPR008949">
    <property type="entry name" value="Isoprenoid_synthase_dom_sf"/>
</dbReference>
<dbReference type="InterPro" id="IPR044814">
    <property type="entry name" value="Terpene_cyclase_plant_C1"/>
</dbReference>
<dbReference type="InterPro" id="IPR001906">
    <property type="entry name" value="Terpene_synth_N"/>
</dbReference>
<dbReference type="InterPro" id="IPR036965">
    <property type="entry name" value="Terpene_synth_N_sf"/>
</dbReference>
<dbReference type="InterPro" id="IPR050148">
    <property type="entry name" value="Terpene_synthase-like"/>
</dbReference>
<dbReference type="InterPro" id="IPR005630">
    <property type="entry name" value="Terpene_synthase_metal-bd"/>
</dbReference>
<dbReference type="InterPro" id="IPR008930">
    <property type="entry name" value="Terpenoid_cyclase/PrenylTrfase"/>
</dbReference>
<dbReference type="PANTHER" id="PTHR31225">
    <property type="entry name" value="OS04G0344100 PROTEIN-RELATED"/>
    <property type="match status" value="1"/>
</dbReference>
<dbReference type="PANTHER" id="PTHR31225:SF9">
    <property type="entry name" value="TERPENE SYNTHASE 10"/>
    <property type="match status" value="1"/>
</dbReference>
<dbReference type="Pfam" id="PF01397">
    <property type="entry name" value="Terpene_synth"/>
    <property type="match status" value="1"/>
</dbReference>
<dbReference type="Pfam" id="PF03936">
    <property type="entry name" value="Terpene_synth_C"/>
    <property type="match status" value="1"/>
</dbReference>
<dbReference type="SFLD" id="SFLDS00005">
    <property type="entry name" value="Isoprenoid_Synthase_Type_I"/>
    <property type="match status" value="1"/>
</dbReference>
<dbReference type="SFLD" id="SFLDG01604">
    <property type="entry name" value="Terpene_Cyclase_Like_1_C_Termi"/>
    <property type="match status" value="1"/>
</dbReference>
<dbReference type="SFLD" id="SFLDG01014">
    <property type="entry name" value="Terpene_Cyclase_Like_1_N-term"/>
    <property type="match status" value="1"/>
</dbReference>
<dbReference type="SUPFAM" id="SSF48239">
    <property type="entry name" value="Terpenoid cyclases/Protein prenyltransferases"/>
    <property type="match status" value="1"/>
</dbReference>
<dbReference type="SUPFAM" id="SSF48576">
    <property type="entry name" value="Terpenoid synthases"/>
    <property type="match status" value="1"/>
</dbReference>
<keyword id="KW-0150">Chloroplast</keyword>
<keyword id="KW-0456">Lyase</keyword>
<keyword id="KW-0460">Magnesium</keyword>
<keyword id="KW-0479">Metal-binding</keyword>
<keyword id="KW-0934">Plastid</keyword>
<keyword id="KW-0809">Transit peptide</keyword>
<comment type="function">
    <text evidence="4">Monoterpene synthase involved in the biosynthesis of volatile compounds widely used in aromatherapy and folk medicine, and present in culinary herbs (PubMed:24943828). Mediates the conversion of (2E)-geranyl diphosphate (GPP) into alpha fenchol, limonene and alpha-pinene and, as minor compounds, into beta-myrcene, alpha-terpinolene and alpha-phellandrene (PubMed:24943828).</text>
</comment>
<comment type="catalytic activity">
    <reaction evidence="4">
        <text>(2E)-geranyl diphosphate = alpha-pinene + diphosphate</text>
        <dbReference type="Rhea" id="RHEA:25662"/>
        <dbReference type="ChEBI" id="CHEBI:33019"/>
        <dbReference type="ChEBI" id="CHEBI:36740"/>
        <dbReference type="ChEBI" id="CHEBI:58057"/>
    </reaction>
    <physiologicalReaction direction="left-to-right" evidence="4">
        <dbReference type="Rhea" id="RHEA:25663"/>
    </physiologicalReaction>
</comment>
<comment type="catalytic activity">
    <reaction evidence="4">
        <text>(2E)-geranyl diphosphate + H2O = (1S,2S,4R)-endo-fenchol + diphosphate</text>
        <dbReference type="Rhea" id="RHEA:20565"/>
        <dbReference type="ChEBI" id="CHEBI:15377"/>
        <dbReference type="ChEBI" id="CHEBI:15405"/>
        <dbReference type="ChEBI" id="CHEBI:33019"/>
        <dbReference type="ChEBI" id="CHEBI:58057"/>
        <dbReference type="EC" id="4.2.3.10"/>
    </reaction>
    <physiologicalReaction direction="left-to-right" evidence="4">
        <dbReference type="Rhea" id="RHEA:20566"/>
    </physiologicalReaction>
</comment>
<comment type="catalytic activity">
    <reaction evidence="4">
        <text>(2E)-geranyl diphosphate = limonene + diphosphate</text>
        <dbReference type="Rhea" id="RHEA:68640"/>
        <dbReference type="ChEBI" id="CHEBI:15384"/>
        <dbReference type="ChEBI" id="CHEBI:33019"/>
        <dbReference type="ChEBI" id="CHEBI:58057"/>
    </reaction>
    <physiologicalReaction direction="left-to-right" evidence="4">
        <dbReference type="Rhea" id="RHEA:68641"/>
    </physiologicalReaction>
</comment>
<comment type="cofactor">
    <cofactor evidence="1">
        <name>Mg(2+)</name>
        <dbReference type="ChEBI" id="CHEBI:18420"/>
    </cofactor>
    <cofactor evidence="1">
        <name>Mn(2+)</name>
        <dbReference type="ChEBI" id="CHEBI:29035"/>
    </cofactor>
    <text evidence="1">Binds 3 Mg(2+) or Mn(2+) ions per subunit.</text>
</comment>
<comment type="pathway">
    <text evidence="4">Secondary metabolite biosynthesis; terpenoid biosynthesis.</text>
</comment>
<comment type="subcellular location">
    <subcellularLocation>
        <location evidence="3">Plastid</location>
        <location evidence="3">Chloroplast</location>
    </subcellularLocation>
</comment>
<comment type="tissue specificity">
    <text evidence="4">Expressed at high levels in leaves.</text>
</comment>
<comment type="domain">
    <text evidence="2">The Asp-Asp-Xaa-Xaa-Asp/Glu (DDXXD/E) motif is important for the catalytic activity, presumably through binding to Mg(2+).</text>
</comment>
<comment type="similarity">
    <text evidence="6">Belongs to the terpene synthase family. Tpsa subfamily.</text>
</comment>
<feature type="transit peptide" description="Chloroplast" evidence="3">
    <location>
        <begin position="1"/>
        <end position="50"/>
    </location>
</feature>
<feature type="chain" id="PRO_0000454956" description="(-)-endo-fenchol synthase, chloroplastic">
    <location>
        <begin position="51"/>
        <end position="594"/>
    </location>
</feature>
<feature type="short sequence motif" description="DDXXD motif" evidence="1">
    <location>
        <begin position="348"/>
        <end position="352"/>
    </location>
</feature>
<feature type="binding site" evidence="2">
    <location>
        <position position="348"/>
    </location>
    <ligand>
        <name>Mg(2+)</name>
        <dbReference type="ChEBI" id="CHEBI:18420"/>
        <label>1</label>
    </ligand>
</feature>
<feature type="binding site" evidence="2">
    <location>
        <position position="348"/>
    </location>
    <ligand>
        <name>Mg(2+)</name>
        <dbReference type="ChEBI" id="CHEBI:18420"/>
        <label>2</label>
    </ligand>
</feature>
<feature type="binding site" evidence="2">
    <location>
        <position position="352"/>
    </location>
    <ligand>
        <name>Mg(2+)</name>
        <dbReference type="ChEBI" id="CHEBI:18420"/>
        <label>1</label>
    </ligand>
</feature>
<feature type="binding site" evidence="2">
    <location>
        <position position="352"/>
    </location>
    <ligand>
        <name>Mg(2+)</name>
        <dbReference type="ChEBI" id="CHEBI:18420"/>
        <label>2</label>
    </ligand>
</feature>
<feature type="binding site" evidence="2">
    <location>
        <position position="492"/>
    </location>
    <ligand>
        <name>Mg(2+)</name>
        <dbReference type="ChEBI" id="CHEBI:18420"/>
        <label>3</label>
    </ligand>
</feature>
<feature type="binding site" evidence="2">
    <location>
        <position position="500"/>
    </location>
    <ligand>
        <name>Mg(2+)</name>
        <dbReference type="ChEBI" id="CHEBI:18420"/>
        <label>3</label>
    </ligand>
</feature>
<organism>
    <name type="scientific">Lavandula pedunculata subsp. lusitanica</name>
    <name type="common">French lavender</name>
    <dbReference type="NCBI Taxonomy" id="1343917"/>
    <lineage>
        <taxon>Eukaryota</taxon>
        <taxon>Viridiplantae</taxon>
        <taxon>Streptophyta</taxon>
        <taxon>Embryophyta</taxon>
        <taxon>Tracheophyta</taxon>
        <taxon>Spermatophyta</taxon>
        <taxon>Magnoliopsida</taxon>
        <taxon>eudicotyledons</taxon>
        <taxon>Gunneridae</taxon>
        <taxon>Pentapetalae</taxon>
        <taxon>asterids</taxon>
        <taxon>lamiids</taxon>
        <taxon>Lamiales</taxon>
        <taxon>Lamiaceae</taxon>
        <taxon>Nepetoideae</taxon>
        <taxon>Ocimeae</taxon>
        <taxon>Lavandulinae</taxon>
        <taxon>Lavandula</taxon>
    </lineage>
</organism>
<reference key="1">
    <citation type="journal article" date="2015" name="Physiol. Plantarum">
        <title>Functional characterization of terpene synthases and chemotypic variation in three lavender species of section Stoechas.</title>
        <authorList>
            <person name="Benabdelkader T."/>
            <person name="Guitton Y."/>
            <person name="Pasquier B."/>
            <person name="Magnard J.L."/>
            <person name="Jullien F."/>
            <person name="Kameli A."/>
            <person name="Legendre L."/>
        </authorList>
    </citation>
    <scope>NUCLEOTIDE SEQUENCE [MRNA]</scope>
    <scope>FUNCTION</scope>
    <scope>CATALYTIC ACTIVITY</scope>
    <scope>PATHWAY</scope>
    <scope>TISSUE SPECIFICITY</scope>
    <source>
        <tissue>Leaf</tissue>
    </source>
</reference>
<protein>
    <recommendedName>
        <fullName evidence="5">(-)-endo-fenchol synthase, chloroplastic</fullName>
        <shortName evidence="5">Alpha fenchol synthase</shortName>
        <shortName evidence="5">LpFENS</shortName>
        <ecNumber evidence="4">4.2.3.10</ecNumber>
    </recommendedName>
    <alternativeName>
        <fullName evidence="5">Alpha pinene synthase</fullName>
        <ecNumber evidence="4">4.2.3.-</ecNumber>
    </alternativeName>
    <alternativeName>
        <fullName evidence="5">Limonene synthase</fullName>
        <ecNumber evidence="4">4.2.3.-</ecNumber>
    </alternativeName>
</protein>
<evidence type="ECO:0000250" key="1">
    <source>
        <dbReference type="UniProtKB" id="A0A1C9J6A7"/>
    </source>
</evidence>
<evidence type="ECO:0000250" key="2">
    <source>
        <dbReference type="UniProtKB" id="Q40577"/>
    </source>
</evidence>
<evidence type="ECO:0000255" key="3"/>
<evidence type="ECO:0000269" key="4">
    <source>
    </source>
</evidence>
<evidence type="ECO:0000303" key="5">
    <source>
    </source>
</evidence>
<evidence type="ECO:0000305" key="6"/>
<accession>T1RRR9</accession>